<reference key="1">
    <citation type="submission" date="2007-06" db="EMBL/GenBank/DDBJ databases">
        <authorList>
            <consortium name="NIH - Mammalian Gene Collection (MGC) project"/>
        </authorList>
    </citation>
    <scope>NUCLEOTIDE SEQUENCE [LARGE SCALE MRNA]</scope>
    <source>
        <strain>Hereford</strain>
        <tissue>Hypothalamus</tissue>
    </source>
</reference>
<evidence type="ECO:0000250" key="1">
    <source>
        <dbReference type="UniProtKB" id="Q99M71"/>
    </source>
</evidence>
<evidence type="ECO:0000250" key="2">
    <source>
        <dbReference type="UniProtKB" id="Q9UM22"/>
    </source>
</evidence>
<evidence type="ECO:0000255" key="3"/>
<evidence type="ECO:0000305" key="4"/>
<dbReference type="EMBL" id="BC147972">
    <property type="protein sequence ID" value="AAI47973.1"/>
    <property type="molecule type" value="mRNA"/>
</dbReference>
<dbReference type="RefSeq" id="NP_001095758.1">
    <property type="nucleotide sequence ID" value="NM_001102288.3"/>
</dbReference>
<dbReference type="SMR" id="A6QLI0"/>
<dbReference type="FunCoup" id="A6QLI0">
    <property type="interactions" value="315"/>
</dbReference>
<dbReference type="STRING" id="9913.ENSBTAP00000044382"/>
<dbReference type="GlyCosmos" id="A6QLI0">
    <property type="glycosylation" value="2 sites, No reported glycans"/>
</dbReference>
<dbReference type="GlyGen" id="A6QLI0">
    <property type="glycosylation" value="2 sites"/>
</dbReference>
<dbReference type="PaxDb" id="9913-ENSBTAP00000044382"/>
<dbReference type="Ensembl" id="ENSBTAT00000047158.5">
    <property type="protein sequence ID" value="ENSBTAP00000044382.3"/>
    <property type="gene ID" value="ENSBTAG00000033197.5"/>
</dbReference>
<dbReference type="GeneID" id="615376"/>
<dbReference type="KEGG" id="bta:615376"/>
<dbReference type="CTD" id="54749"/>
<dbReference type="VEuPathDB" id="HostDB:ENSBTAG00000033197"/>
<dbReference type="VGNC" id="VGNC:28530">
    <property type="gene designation" value="EPDR1"/>
</dbReference>
<dbReference type="eggNOG" id="ENOG502QQ8T">
    <property type="taxonomic scope" value="Eukaryota"/>
</dbReference>
<dbReference type="GeneTree" id="ENSGT00940000161910"/>
<dbReference type="HOGENOM" id="CLU_097673_0_0_1"/>
<dbReference type="InParanoid" id="A6QLI0"/>
<dbReference type="OMA" id="TMKDCYP"/>
<dbReference type="OrthoDB" id="6084362at2759"/>
<dbReference type="TreeFam" id="TF328581"/>
<dbReference type="Proteomes" id="UP000009136">
    <property type="component" value="Chromosome 4"/>
</dbReference>
<dbReference type="Bgee" id="ENSBTAG00000033197">
    <property type="expression patterns" value="Expressed in thyroid gland and 101 other cell types or tissues"/>
</dbReference>
<dbReference type="GO" id="GO:0005576">
    <property type="term" value="C:extracellular region"/>
    <property type="evidence" value="ECO:0007669"/>
    <property type="project" value="UniProtKB-SubCell"/>
</dbReference>
<dbReference type="GO" id="GO:0043202">
    <property type="term" value="C:lysosomal lumen"/>
    <property type="evidence" value="ECO:0007669"/>
    <property type="project" value="UniProtKB-SubCell"/>
</dbReference>
<dbReference type="GO" id="GO:0005764">
    <property type="term" value="C:lysosome"/>
    <property type="evidence" value="ECO:0000318"/>
    <property type="project" value="GO_Central"/>
</dbReference>
<dbReference type="GO" id="GO:0005509">
    <property type="term" value="F:calcium ion binding"/>
    <property type="evidence" value="ECO:0007669"/>
    <property type="project" value="InterPro"/>
</dbReference>
<dbReference type="GO" id="GO:1905573">
    <property type="term" value="F:ganglioside GM1 binding"/>
    <property type="evidence" value="ECO:0007669"/>
    <property type="project" value="Ensembl"/>
</dbReference>
<dbReference type="GO" id="GO:0042802">
    <property type="term" value="F:identical protein binding"/>
    <property type="evidence" value="ECO:0007669"/>
    <property type="project" value="Ensembl"/>
</dbReference>
<dbReference type="GO" id="GO:0005543">
    <property type="term" value="F:phospholipid binding"/>
    <property type="evidence" value="ECO:0007669"/>
    <property type="project" value="Ensembl"/>
</dbReference>
<dbReference type="GO" id="GO:0007160">
    <property type="term" value="P:cell-matrix adhesion"/>
    <property type="evidence" value="ECO:0007669"/>
    <property type="project" value="InterPro"/>
</dbReference>
<dbReference type="GO" id="GO:1990764">
    <property type="term" value="P:myofibroblast contraction"/>
    <property type="evidence" value="ECO:0007669"/>
    <property type="project" value="Ensembl"/>
</dbReference>
<dbReference type="InterPro" id="IPR001299">
    <property type="entry name" value="Ependymin"/>
</dbReference>
<dbReference type="PANTHER" id="PTHR10697">
    <property type="entry name" value="MAMMALIAN EPENDYMIN-RELATED PROTEIN 1"/>
    <property type="match status" value="1"/>
</dbReference>
<dbReference type="PANTHER" id="PTHR10697:SF1">
    <property type="entry name" value="MAMMALIAN EPENDYMIN-RELATED PROTEIN 1"/>
    <property type="match status" value="1"/>
</dbReference>
<dbReference type="Pfam" id="PF00811">
    <property type="entry name" value="Ependymin"/>
    <property type="match status" value="1"/>
</dbReference>
<dbReference type="PRINTS" id="PR00317">
    <property type="entry name" value="EPENDYMIN"/>
</dbReference>
<dbReference type="SMART" id="SM00026">
    <property type="entry name" value="EPEND"/>
    <property type="match status" value="1"/>
</dbReference>
<protein>
    <recommendedName>
        <fullName>Mammalian ependymin-related protein 1</fullName>
        <shortName>MERP-1</shortName>
    </recommendedName>
</protein>
<name>EPDR1_BOVIN</name>
<sequence length="236" mass="26485">MPRRAPLRVARGSLDAWLLGGLWVCALGCLCGVGMAAPGAGAGAGGSLGAQRPCQAPQQWEGRQVLYRQSTGRYSRALLSYDGLNQRVRVLDERKALIPCKRLFEYILLYKDGVMFQIEQATKQCSKITLTEPWDPLDIPQNSTFEDQYSIGGPQEQITVQEWSDRKSARSYETWIGIYTVKDCYPVQETVTKNYSVILSTRFFDIQLGIKDPSVFIPPSTCQTAQPERMSEECSW</sequence>
<organism>
    <name type="scientific">Bos taurus</name>
    <name type="common">Bovine</name>
    <dbReference type="NCBI Taxonomy" id="9913"/>
    <lineage>
        <taxon>Eukaryota</taxon>
        <taxon>Metazoa</taxon>
        <taxon>Chordata</taxon>
        <taxon>Craniata</taxon>
        <taxon>Vertebrata</taxon>
        <taxon>Euteleostomi</taxon>
        <taxon>Mammalia</taxon>
        <taxon>Eutheria</taxon>
        <taxon>Laurasiatheria</taxon>
        <taxon>Artiodactyla</taxon>
        <taxon>Ruminantia</taxon>
        <taxon>Pecora</taxon>
        <taxon>Bovidae</taxon>
        <taxon>Bovinae</taxon>
        <taxon>Bos</taxon>
    </lineage>
</organism>
<comment type="function">
    <text evidence="2">Binds anionic lipids and gangliosides at acidic pH.</text>
</comment>
<comment type="subunit">
    <text evidence="2">Homodimer.</text>
</comment>
<comment type="subcellular location">
    <subcellularLocation>
        <location evidence="2">Lysosome lumen</location>
    </subcellularLocation>
    <subcellularLocation>
        <location evidence="2">Secreted</location>
    </subcellularLocation>
    <text evidence="2">Lysosomal and also secreted.</text>
</comment>
<comment type="PTM">
    <text evidence="1">N-glycosylated; the glycan contains mannose-6-phosphate moieties.</text>
</comment>
<comment type="similarity">
    <text evidence="4">Belongs to the ependymin family.</text>
</comment>
<gene>
    <name type="primary">EPDR1</name>
    <name type="synonym">MERP1</name>
</gene>
<accession>A6QLI0</accession>
<keyword id="KW-1015">Disulfide bond</keyword>
<keyword id="KW-0325">Glycoprotein</keyword>
<keyword id="KW-0446">Lipid-binding</keyword>
<keyword id="KW-0458">Lysosome</keyword>
<keyword id="KW-1185">Reference proteome</keyword>
<keyword id="KW-0964">Secreted</keyword>
<keyword id="KW-0732">Signal</keyword>
<feature type="signal peptide" evidence="3">
    <location>
        <begin position="1"/>
        <end position="35"/>
    </location>
</feature>
<feature type="chain" id="PRO_0000322975" description="Mammalian ependymin-related protein 1">
    <location>
        <begin position="36"/>
        <end position="236"/>
    </location>
</feature>
<feature type="glycosylation site" description="N-linked (GlcNAc...) asparagine" evidence="3">
    <location>
        <position position="142"/>
    </location>
</feature>
<feature type="glycosylation site" description="N-linked (GlcNAc...) asparagine" evidence="3">
    <location>
        <position position="194"/>
    </location>
</feature>
<feature type="disulfide bond" evidence="2">
    <location>
        <begin position="54"/>
        <end position="184"/>
    </location>
</feature>
<feature type="disulfide bond" evidence="2">
    <location>
        <begin position="100"/>
        <end position="234"/>
    </location>
</feature>
<feature type="disulfide bond" evidence="2">
    <location>
        <begin position="125"/>
        <end position="222"/>
    </location>
</feature>
<proteinExistence type="evidence at transcript level"/>